<reference key="1">
    <citation type="journal article" date="1991" name="Virology">
        <title>Primary structure of the membrane and nucleocapsid protein genes of feline infectious peritonitis virus and immunogenicity of recombinant vaccinia viruses in kittens.</title>
        <authorList>
            <person name="Vennema H."/>
            <person name="de Groot R.J."/>
            <person name="Harbour D.A."/>
            <person name="Horzinek M.C."/>
            <person name="Spaan W.J.M."/>
        </authorList>
    </citation>
    <scope>NUCLEOTIDE SEQUENCE [GENOMIC RNA]</scope>
</reference>
<reference key="2">
    <citation type="journal article" date="2005" name="J. Gen. Virol.">
        <title>Genomic RNA sequence of Feline coronavirus strain FIPV WSU-79/1146.</title>
        <authorList>
            <person name="Dye C."/>
            <person name="Siddell S.G."/>
        </authorList>
    </citation>
    <scope>NUCLEOTIDE SEQUENCE [GENOMIC RNA]</scope>
</reference>
<reference key="3">
    <citation type="submission" date="2005-03" db="EMBL/GenBank/DDBJ databases">
        <authorList>
            <person name="Haijema B.J."/>
            <person name="de Groot-Mijnes J.D.F."/>
            <person name="Vennema H."/>
            <person name="Raamsman M.J."/>
            <person name="Rottier P.J.M."/>
            <person name="de Groot R.J."/>
        </authorList>
    </citation>
    <scope>NUCLEOTIDE SEQUENCE [GENOMIC RNA]</scope>
</reference>
<accession>P25878</accession>
<accession>Q4U5F8</accession>
<accession>Q52PA8</accession>
<sequence>MKYILLILACIIACVYGERYCAMQDSGLQCINGTNSRCQTCFERGDLIWHLANWNFSWSVILIVFITVLQYGRPQFSWLVYGIKMLIMWLLWPIVLALTIFNAYSEYQVSRYVMFGFSVAGAVVTFALWMMYFVRSVQLYRRTKSWWSFNPETNAILCVNALGRSYVLPLDGTPTGVTLTLLSGNLYAEGFKMAGGLTIEHLPKYVMIATPSRTIVYTLVGKQLKATTATGWAYYVKSKAGDYSTEARTDNLSEHEKLLHMV</sequence>
<proteinExistence type="evidence at protein level"/>
<name>VME1_FIPV</name>
<comment type="function">
    <text evidence="1 2">Component of the viral envelope that plays a central role in virus morphogenesis and assembly via its interactions with other viral proteins.</text>
</comment>
<comment type="subunit">
    <text evidence="1 2">Homomultimer. Interacts with envelope E protein in the budding compartment of the host cell, which is located between endoplasmic reticulum and the Golgi complex. Forms a complex with HE and S proteins. Interacts with nucleocapsid N protein. This interaction probably participates in RNA packaging into the virus.</text>
</comment>
<comment type="subcellular location">
    <subcellularLocation>
        <location evidence="1">Virion membrane</location>
        <topology evidence="1">Multi-pass membrane protein</topology>
    </subcellularLocation>
    <subcellularLocation>
        <location evidence="1">Host Golgi apparatus membrane</location>
        <topology evidence="1">Multi-pass membrane protein</topology>
    </subcellularLocation>
    <text evidence="1">Largely embedded in the lipid bilayer.</text>
</comment>
<comment type="similarity">
    <text evidence="1">Belongs to the alphacoronaviruses M protein family.</text>
</comment>
<dbReference type="EMBL" id="X56496">
    <property type="protein sequence ID" value="CAA39850.1"/>
    <property type="molecule type" value="Genomic_RNA"/>
</dbReference>
<dbReference type="EMBL" id="DQ010921">
    <property type="protein sequence ID" value="AAY32598.1"/>
    <property type="molecule type" value="Genomic_RNA"/>
</dbReference>
<dbReference type="EMBL" id="AY994055">
    <property type="protein sequence ID" value="AAY16379.1"/>
    <property type="molecule type" value="Genomic_RNA"/>
</dbReference>
<dbReference type="PIR" id="A38498">
    <property type="entry name" value="MFIH79"/>
</dbReference>
<dbReference type="RefSeq" id="YP_004070198.1">
    <property type="nucleotide sequence ID" value="NC_002306.3"/>
</dbReference>
<dbReference type="SMR" id="P25878"/>
<dbReference type="GlyCosmos" id="P25878">
    <property type="glycosylation" value="1 site, No reported glycans"/>
</dbReference>
<dbReference type="GeneID" id="10040185"/>
<dbReference type="KEGG" id="vg:10040185"/>
<dbReference type="Proteomes" id="UP000000835">
    <property type="component" value="Segment"/>
</dbReference>
<dbReference type="Proteomes" id="UP000140386">
    <property type="component" value="Genome"/>
</dbReference>
<dbReference type="GO" id="GO:0044178">
    <property type="term" value="C:host cell Golgi membrane"/>
    <property type="evidence" value="ECO:0007669"/>
    <property type="project" value="UniProtKB-SubCell"/>
</dbReference>
<dbReference type="GO" id="GO:0016020">
    <property type="term" value="C:membrane"/>
    <property type="evidence" value="ECO:0007669"/>
    <property type="project" value="UniProtKB-UniRule"/>
</dbReference>
<dbReference type="GO" id="GO:0019031">
    <property type="term" value="C:viral envelope"/>
    <property type="evidence" value="ECO:0007669"/>
    <property type="project" value="UniProtKB-UniRule"/>
</dbReference>
<dbReference type="GO" id="GO:0055036">
    <property type="term" value="C:virion membrane"/>
    <property type="evidence" value="ECO:0007669"/>
    <property type="project" value="UniProtKB-SubCell"/>
</dbReference>
<dbReference type="GO" id="GO:0039660">
    <property type="term" value="F:structural constituent of virion"/>
    <property type="evidence" value="ECO:0007669"/>
    <property type="project" value="UniProtKB-UniRule"/>
</dbReference>
<dbReference type="CDD" id="cd21564">
    <property type="entry name" value="alphaCoV_M"/>
    <property type="match status" value="1"/>
</dbReference>
<dbReference type="HAMAP" id="MF_04201">
    <property type="entry name" value="ALPHA_CORONA_M"/>
    <property type="match status" value="1"/>
</dbReference>
<dbReference type="InterPro" id="IPR042551">
    <property type="entry name" value="ALPHA_CORONA_M"/>
</dbReference>
<dbReference type="InterPro" id="IPR002574">
    <property type="entry name" value="M_CoV"/>
</dbReference>
<dbReference type="Pfam" id="PF01635">
    <property type="entry name" value="CoV_M"/>
    <property type="match status" value="1"/>
</dbReference>
<dbReference type="PROSITE" id="PS51927">
    <property type="entry name" value="COV_M"/>
    <property type="match status" value="1"/>
</dbReference>
<organismHost>
    <name type="scientific">Felidae</name>
    <name type="common">cat family</name>
    <dbReference type="NCBI Taxonomy" id="9681"/>
</organismHost>
<keyword id="KW-0325">Glycoprotein</keyword>
<keyword id="KW-1040">Host Golgi apparatus</keyword>
<keyword id="KW-1043">Host membrane</keyword>
<keyword id="KW-0472">Membrane</keyword>
<keyword id="KW-1185">Reference proteome</keyword>
<keyword id="KW-0812">Transmembrane</keyword>
<keyword id="KW-1133">Transmembrane helix</keyword>
<keyword id="KW-0261">Viral envelope protein</keyword>
<keyword id="KW-0468">Viral matrix protein</keyword>
<keyword id="KW-0946">Virion</keyword>
<feature type="chain" id="PRO_0000037158" description="Membrane protein">
    <location>
        <begin position="1"/>
        <end position="262"/>
    </location>
</feature>
<feature type="topological domain" description="Virion surface" evidence="1">
    <location>
        <begin position="19"/>
        <end position="47"/>
    </location>
</feature>
<feature type="transmembrane region" description="Helical" evidence="1">
    <location>
        <begin position="48"/>
        <end position="68"/>
    </location>
</feature>
<feature type="topological domain" description="Intravirion" evidence="1">
    <location>
        <begin position="69"/>
        <end position="77"/>
    </location>
</feature>
<feature type="transmembrane region" description="Helical" evidence="1">
    <location>
        <begin position="78"/>
        <end position="98"/>
    </location>
</feature>
<feature type="topological domain" description="Virion surface" evidence="1">
    <location>
        <begin position="99"/>
        <end position="112"/>
    </location>
</feature>
<feature type="transmembrane region" description="Helical" evidence="1">
    <location>
        <begin position="113"/>
        <end position="133"/>
    </location>
</feature>
<feature type="topological domain" description="Intravirion" evidence="1">
    <location>
        <begin position="134"/>
        <end position="262"/>
    </location>
</feature>
<feature type="region of interest" description="Interaction with N protein" evidence="1">
    <location>
        <begin position="237"/>
        <end position="252"/>
    </location>
</feature>
<feature type="glycosylation site" description="N-linked (GlcNAc...) asparagine; by host">
    <location>
        <position position="32"/>
    </location>
</feature>
<gene>
    <name evidence="1" type="primary">M</name>
    <name type="ORF">5</name>
</gene>
<organism>
    <name type="scientific">Feline coronavirus (strain FIPV WSU-79/1146)</name>
    <name type="common">FCoV</name>
    <dbReference type="NCBI Taxonomy" id="33734"/>
    <lineage>
        <taxon>Viruses</taxon>
        <taxon>Riboviria</taxon>
        <taxon>Orthornavirae</taxon>
        <taxon>Pisuviricota</taxon>
        <taxon>Pisoniviricetes</taxon>
        <taxon>Nidovirales</taxon>
        <taxon>Cornidovirineae</taxon>
        <taxon>Coronaviridae</taxon>
        <taxon>Orthocoronavirinae</taxon>
        <taxon>Alphacoronavirus</taxon>
        <taxon>Tegacovirus</taxon>
        <taxon>Alphacoronavirus 1</taxon>
    </lineage>
</organism>
<protein>
    <recommendedName>
        <fullName evidence="1">Membrane protein</fullName>
        <shortName evidence="1">M protein</shortName>
    </recommendedName>
    <alternativeName>
        <fullName evidence="1">E1 glycoprotein</fullName>
    </alternativeName>
    <alternativeName>
        <fullName evidence="1">Matrix glycoprotein</fullName>
    </alternativeName>
    <alternativeName>
        <fullName evidence="1">Membrane glycoprotein</fullName>
    </alternativeName>
</protein>
<evidence type="ECO:0000255" key="1">
    <source>
        <dbReference type="HAMAP-Rule" id="MF_04201"/>
    </source>
</evidence>
<evidence type="ECO:0000255" key="2">
    <source>
        <dbReference type="PROSITE-ProRule" id="PRU01275"/>
    </source>
</evidence>